<organism>
    <name type="scientific">Dehalococcoides mccartyi (strain CBDB1)</name>
    <dbReference type="NCBI Taxonomy" id="255470"/>
    <lineage>
        <taxon>Bacteria</taxon>
        <taxon>Bacillati</taxon>
        <taxon>Chloroflexota</taxon>
        <taxon>Dehalococcoidia</taxon>
        <taxon>Dehalococcoidales</taxon>
        <taxon>Dehalococcoidaceae</taxon>
        <taxon>Dehalococcoides</taxon>
    </lineage>
</organism>
<reference key="1">
    <citation type="journal article" date="2005" name="Nat. Biotechnol.">
        <title>Genome sequence of the chlorinated compound-respiring bacterium Dehalococcoides species strain CBDB1.</title>
        <authorList>
            <person name="Kube M."/>
            <person name="Beck A."/>
            <person name="Zinder S.H."/>
            <person name="Kuhl H."/>
            <person name="Reinhardt R."/>
            <person name="Adrian L."/>
        </authorList>
    </citation>
    <scope>NUCLEOTIDE SEQUENCE [LARGE SCALE GENOMIC DNA]</scope>
    <source>
        <strain>CBDB1</strain>
    </source>
</reference>
<evidence type="ECO:0000255" key="1">
    <source>
        <dbReference type="HAMAP-Rule" id="MF_00358"/>
    </source>
</evidence>
<evidence type="ECO:0000256" key="2">
    <source>
        <dbReference type="SAM" id="MobiDB-lite"/>
    </source>
</evidence>
<evidence type="ECO:0000305" key="3"/>
<protein>
    <recommendedName>
        <fullName evidence="1">Small ribosomal subunit protein bS21</fullName>
    </recommendedName>
    <alternativeName>
        <fullName evidence="3">30S ribosomal protein S21</fullName>
    </alternativeName>
</protein>
<comment type="similarity">
    <text evidence="1">Belongs to the bacterial ribosomal protein bS21 family.</text>
</comment>
<proteinExistence type="inferred from homology"/>
<gene>
    <name evidence="1" type="primary">rpsU</name>
    <name type="ordered locus">cbdbA293</name>
</gene>
<dbReference type="EMBL" id="AJ965256">
    <property type="protein sequence ID" value="CAI82523.1"/>
    <property type="molecule type" value="Genomic_DNA"/>
</dbReference>
<dbReference type="RefSeq" id="WP_010936130.1">
    <property type="nucleotide sequence ID" value="NC_007356.1"/>
</dbReference>
<dbReference type="SMR" id="Q3ZZ95"/>
<dbReference type="GeneID" id="3230359"/>
<dbReference type="KEGG" id="deh:cbdbA293"/>
<dbReference type="HOGENOM" id="CLU_159258_1_2_0"/>
<dbReference type="Proteomes" id="UP000000433">
    <property type="component" value="Chromosome"/>
</dbReference>
<dbReference type="GO" id="GO:1990904">
    <property type="term" value="C:ribonucleoprotein complex"/>
    <property type="evidence" value="ECO:0007669"/>
    <property type="project" value="UniProtKB-KW"/>
</dbReference>
<dbReference type="GO" id="GO:0005840">
    <property type="term" value="C:ribosome"/>
    <property type="evidence" value="ECO:0007669"/>
    <property type="project" value="UniProtKB-KW"/>
</dbReference>
<dbReference type="GO" id="GO:0003735">
    <property type="term" value="F:structural constituent of ribosome"/>
    <property type="evidence" value="ECO:0007669"/>
    <property type="project" value="InterPro"/>
</dbReference>
<dbReference type="GO" id="GO:0006412">
    <property type="term" value="P:translation"/>
    <property type="evidence" value="ECO:0007669"/>
    <property type="project" value="UniProtKB-UniRule"/>
</dbReference>
<dbReference type="Gene3D" id="1.20.5.1150">
    <property type="entry name" value="Ribosomal protein S8"/>
    <property type="match status" value="1"/>
</dbReference>
<dbReference type="HAMAP" id="MF_00358">
    <property type="entry name" value="Ribosomal_bS21"/>
    <property type="match status" value="1"/>
</dbReference>
<dbReference type="InterPro" id="IPR001911">
    <property type="entry name" value="Ribosomal_bS21"/>
</dbReference>
<dbReference type="InterPro" id="IPR038380">
    <property type="entry name" value="Ribosomal_bS21_sf"/>
</dbReference>
<dbReference type="NCBIfam" id="TIGR00030">
    <property type="entry name" value="S21p"/>
    <property type="match status" value="1"/>
</dbReference>
<dbReference type="Pfam" id="PF01165">
    <property type="entry name" value="Ribosomal_S21"/>
    <property type="match status" value="1"/>
</dbReference>
<dbReference type="PRINTS" id="PR00976">
    <property type="entry name" value="RIBOSOMALS21"/>
</dbReference>
<sequence length="64" mass="7641">MADVRPENNESFESMLKRFNRKVQQDGILSEARRRTRFERPPTRRKRKDAAKRRLAIKAARKAT</sequence>
<name>RS21_DEHMC</name>
<accession>Q3ZZ95</accession>
<keyword id="KW-0687">Ribonucleoprotein</keyword>
<keyword id="KW-0689">Ribosomal protein</keyword>
<feature type="chain" id="PRO_0000266663" description="Small ribosomal subunit protein bS21">
    <location>
        <begin position="1"/>
        <end position="64"/>
    </location>
</feature>
<feature type="region of interest" description="Disordered" evidence="2">
    <location>
        <begin position="26"/>
        <end position="64"/>
    </location>
</feature>
<feature type="compositionally biased region" description="Basic residues" evidence="2">
    <location>
        <begin position="43"/>
        <end position="64"/>
    </location>
</feature>